<organism>
    <name type="scientific">Staphylococcus aureus (strain MRSA252)</name>
    <dbReference type="NCBI Taxonomy" id="282458"/>
    <lineage>
        <taxon>Bacteria</taxon>
        <taxon>Bacillati</taxon>
        <taxon>Bacillota</taxon>
        <taxon>Bacilli</taxon>
        <taxon>Bacillales</taxon>
        <taxon>Staphylococcaceae</taxon>
        <taxon>Staphylococcus</taxon>
    </lineage>
</organism>
<proteinExistence type="inferred from homology"/>
<reference key="1">
    <citation type="journal article" date="2004" name="Proc. Natl. Acad. Sci. U.S.A.">
        <title>Complete genomes of two clinical Staphylococcus aureus strains: evidence for the rapid evolution of virulence and drug resistance.</title>
        <authorList>
            <person name="Holden M.T.G."/>
            <person name="Feil E.J."/>
            <person name="Lindsay J.A."/>
            <person name="Peacock S.J."/>
            <person name="Day N.P.J."/>
            <person name="Enright M.C."/>
            <person name="Foster T.J."/>
            <person name="Moore C.E."/>
            <person name="Hurst L."/>
            <person name="Atkin R."/>
            <person name="Barron A."/>
            <person name="Bason N."/>
            <person name="Bentley S.D."/>
            <person name="Chillingworth C."/>
            <person name="Chillingworth T."/>
            <person name="Churcher C."/>
            <person name="Clark L."/>
            <person name="Corton C."/>
            <person name="Cronin A."/>
            <person name="Doggett J."/>
            <person name="Dowd L."/>
            <person name="Feltwell T."/>
            <person name="Hance Z."/>
            <person name="Harris B."/>
            <person name="Hauser H."/>
            <person name="Holroyd S."/>
            <person name="Jagels K."/>
            <person name="James K.D."/>
            <person name="Lennard N."/>
            <person name="Line A."/>
            <person name="Mayes R."/>
            <person name="Moule S."/>
            <person name="Mungall K."/>
            <person name="Ormond D."/>
            <person name="Quail M.A."/>
            <person name="Rabbinowitsch E."/>
            <person name="Rutherford K.M."/>
            <person name="Sanders M."/>
            <person name="Sharp S."/>
            <person name="Simmonds M."/>
            <person name="Stevens K."/>
            <person name="Whitehead S."/>
            <person name="Barrell B.G."/>
            <person name="Spratt B.G."/>
            <person name="Parkhill J."/>
        </authorList>
    </citation>
    <scope>NUCLEOTIDE SEQUENCE [LARGE SCALE GENOMIC DNA]</scope>
    <source>
        <strain>MRSA252</strain>
    </source>
</reference>
<keyword id="KW-0687">Ribonucleoprotein</keyword>
<keyword id="KW-0689">Ribosomal protein</keyword>
<keyword id="KW-0694">RNA-binding</keyword>
<keyword id="KW-0699">rRNA-binding</keyword>
<dbReference type="EMBL" id="BX571856">
    <property type="protein sequence ID" value="CAG41300.1"/>
    <property type="molecule type" value="Genomic_DNA"/>
</dbReference>
<dbReference type="RefSeq" id="WP_000623881.1">
    <property type="nucleotide sequence ID" value="NC_002952.2"/>
</dbReference>
<dbReference type="SMR" id="Q6GEJ9"/>
<dbReference type="KEGG" id="sar:SAR2319"/>
<dbReference type="HOGENOM" id="CLU_098841_0_1_9"/>
<dbReference type="Proteomes" id="UP000000596">
    <property type="component" value="Chromosome"/>
</dbReference>
<dbReference type="GO" id="GO:0022625">
    <property type="term" value="C:cytosolic large ribosomal subunit"/>
    <property type="evidence" value="ECO:0007669"/>
    <property type="project" value="TreeGrafter"/>
</dbReference>
<dbReference type="GO" id="GO:0008097">
    <property type="term" value="F:5S rRNA binding"/>
    <property type="evidence" value="ECO:0007669"/>
    <property type="project" value="TreeGrafter"/>
</dbReference>
<dbReference type="GO" id="GO:0003735">
    <property type="term" value="F:structural constituent of ribosome"/>
    <property type="evidence" value="ECO:0007669"/>
    <property type="project" value="InterPro"/>
</dbReference>
<dbReference type="GO" id="GO:0006412">
    <property type="term" value="P:translation"/>
    <property type="evidence" value="ECO:0007669"/>
    <property type="project" value="UniProtKB-UniRule"/>
</dbReference>
<dbReference type="CDD" id="cd00432">
    <property type="entry name" value="Ribosomal_L18_L5e"/>
    <property type="match status" value="1"/>
</dbReference>
<dbReference type="FunFam" id="3.30.420.100:FF:000001">
    <property type="entry name" value="50S ribosomal protein L18"/>
    <property type="match status" value="1"/>
</dbReference>
<dbReference type="Gene3D" id="3.30.420.100">
    <property type="match status" value="1"/>
</dbReference>
<dbReference type="HAMAP" id="MF_01337_B">
    <property type="entry name" value="Ribosomal_uL18_B"/>
    <property type="match status" value="1"/>
</dbReference>
<dbReference type="InterPro" id="IPR004389">
    <property type="entry name" value="Ribosomal_uL18_bac-type"/>
</dbReference>
<dbReference type="InterPro" id="IPR005484">
    <property type="entry name" value="Ribosomal_uL18_bac/euk"/>
</dbReference>
<dbReference type="NCBIfam" id="TIGR00060">
    <property type="entry name" value="L18_bact"/>
    <property type="match status" value="1"/>
</dbReference>
<dbReference type="PANTHER" id="PTHR12899">
    <property type="entry name" value="39S RIBOSOMAL PROTEIN L18, MITOCHONDRIAL"/>
    <property type="match status" value="1"/>
</dbReference>
<dbReference type="PANTHER" id="PTHR12899:SF3">
    <property type="entry name" value="LARGE RIBOSOMAL SUBUNIT PROTEIN UL18M"/>
    <property type="match status" value="1"/>
</dbReference>
<dbReference type="Pfam" id="PF00861">
    <property type="entry name" value="Ribosomal_L18p"/>
    <property type="match status" value="1"/>
</dbReference>
<dbReference type="SUPFAM" id="SSF53137">
    <property type="entry name" value="Translational machinery components"/>
    <property type="match status" value="1"/>
</dbReference>
<sequence length="119" mass="13097">MISKIDKNKVRLKRHARVRTNLSGTAEKPRLNVYRSNKHIYAQIIDDNKGVTLAQASSKDSDIATTATKVELATKVGEAIAKKAADKGIKEIVFDRGGYLYHGRVKALAEAARESGLEF</sequence>
<gene>
    <name evidence="1" type="primary">rplR</name>
    <name type="ordered locus">SAR2319</name>
</gene>
<feature type="chain" id="PRO_0000131345" description="Large ribosomal subunit protein uL18">
    <location>
        <begin position="1"/>
        <end position="119"/>
    </location>
</feature>
<name>RL18_STAAR</name>
<protein>
    <recommendedName>
        <fullName evidence="1">Large ribosomal subunit protein uL18</fullName>
    </recommendedName>
    <alternativeName>
        <fullName evidence="2">50S ribosomal protein L18</fullName>
    </alternativeName>
</protein>
<comment type="function">
    <text evidence="1">This is one of the proteins that bind and probably mediate the attachment of the 5S RNA into the large ribosomal subunit, where it forms part of the central protuberance.</text>
</comment>
<comment type="subunit">
    <text evidence="1">Part of the 50S ribosomal subunit; part of the 5S rRNA/L5/L18/L25 subcomplex. Contacts the 5S and 23S rRNAs.</text>
</comment>
<comment type="similarity">
    <text evidence="1">Belongs to the universal ribosomal protein uL18 family.</text>
</comment>
<accession>Q6GEJ9</accession>
<evidence type="ECO:0000255" key="1">
    <source>
        <dbReference type="HAMAP-Rule" id="MF_01337"/>
    </source>
</evidence>
<evidence type="ECO:0000305" key="2"/>